<sequence>MATGAANVESPQSLPLRLLGRVALVTGGSSGIGESIVLLFRKHGAKVCIADVQDNQGQRLCETLGGSSDIAFCHCDVTIEDDVKRAVDFTVDKFGTLDIMVNNAGVSGPPCPDIRDFELSAFDRVFDINVRGVFIGMKHAARIMIPAKKGSIISISSVASTMGGLGPHAYTGSKHAVLGLTKNVAAELGKHGIRVNCVSPYAVATSLALAHLPEAERTEDTWDDFRRFVADNANLQGVELTMEDVANAVVFLASDEARYVSGMNLMVDGGFTSTNHALQVFRP</sequence>
<organism>
    <name type="scientific">Salvia officinalis</name>
    <name type="common">Sage</name>
    <dbReference type="NCBI Taxonomy" id="38868"/>
    <lineage>
        <taxon>Eukaryota</taxon>
        <taxon>Viridiplantae</taxon>
        <taxon>Streptophyta</taxon>
        <taxon>Embryophyta</taxon>
        <taxon>Tracheophyta</taxon>
        <taxon>Spermatophyta</taxon>
        <taxon>Magnoliopsida</taxon>
        <taxon>eudicotyledons</taxon>
        <taxon>Gunneridae</taxon>
        <taxon>Pentapetalae</taxon>
        <taxon>asterids</taxon>
        <taxon>lamiids</taxon>
        <taxon>Lamiales</taxon>
        <taxon>Lamiaceae</taxon>
        <taxon>Nepetoideae</taxon>
        <taxon>Mentheae</taxon>
        <taxon>Salviinae</taxon>
        <taxon>Salvia</taxon>
        <taxon>Salvia incertae sedis</taxon>
    </lineage>
</organism>
<proteinExistence type="evidence at protein level"/>
<evidence type="ECO:0000250" key="1">
    <source>
        <dbReference type="UniProtKB" id="I6Y778"/>
    </source>
</evidence>
<evidence type="ECO:0000250" key="2">
    <source>
        <dbReference type="UniProtKB" id="O93868"/>
    </source>
</evidence>
<evidence type="ECO:0000250" key="3">
    <source>
        <dbReference type="UniProtKB" id="P19337"/>
    </source>
</evidence>
<evidence type="ECO:0000255" key="4">
    <source>
        <dbReference type="PROSITE-ProRule" id="PRU10001"/>
    </source>
</evidence>
<evidence type="ECO:0000269" key="5">
    <source>
    </source>
</evidence>
<evidence type="ECO:0000303" key="6">
    <source>
    </source>
</evidence>
<evidence type="ECO:0000305" key="7"/>
<evidence type="ECO:0000305" key="8">
    <source>
    </source>
</evidence>
<evidence type="ECO:0007829" key="9">
    <source>
        <dbReference type="PDB" id="7O6P"/>
    </source>
</evidence>
<gene>
    <name evidence="6" type="primary">BDH2</name>
</gene>
<name>BDH2_SALOF</name>
<comment type="function">
    <text evidence="5">Involved in the biosynthesis of monoterpene natural products related to camphor (PubMed:31927319). Catalayzes the oxidation of (+)-borneol to (+)-camphor (PubMed:31927319). Shows absolute selectivity towards (+)-borneol (PubMed:31927319). Catalyzes the oxidation of (+)-isoborneol to (-)-camphor (PubMed:31927319). Shows absolute selectivity towards (+)-isoborneol (PubMed:31927319).</text>
</comment>
<comment type="catalytic activity">
    <reaction evidence="5">
        <text>(1R,2S,4R)-borneol + NAD(+) = (1R,4R)-camphor + NADH + H(+)</text>
        <dbReference type="Rhea" id="RHEA:17329"/>
        <dbReference type="ChEBI" id="CHEBI:15378"/>
        <dbReference type="ChEBI" id="CHEBI:15393"/>
        <dbReference type="ChEBI" id="CHEBI:15396"/>
        <dbReference type="ChEBI" id="CHEBI:57540"/>
        <dbReference type="ChEBI" id="CHEBI:57945"/>
        <dbReference type="EC" id="1.1.1.198"/>
    </reaction>
    <physiologicalReaction direction="left-to-right" evidence="5">
        <dbReference type="Rhea" id="RHEA:17330"/>
    </physiologicalReaction>
</comment>
<comment type="biophysicochemical properties">
    <kinetics>
        <KM evidence="5">48 uM for NAD(+)</KM>
        <KM evidence="5">160 uM for (1R,2S,4R)-borneol</KM>
    </kinetics>
</comment>
<comment type="similarity">
    <text evidence="7">Belongs to the short-chain dehydrogenases/reductases (SDR) family.</text>
</comment>
<reference key="1">
    <citation type="journal article" date="2020" name="Phytochemistry">
        <title>Molecular cloning and functional characterization of a two highly stereoselective borneol dehydrogenases from Salvia officinalis L.</title>
        <authorList>
            <person name="Drienovska I."/>
            <person name="Kolanovic D."/>
            <person name="Chanique A."/>
            <person name="Sieber V."/>
            <person name="Hofer M."/>
            <person name="Kourist R."/>
        </authorList>
    </citation>
    <scope>NUCLEOTIDE SEQUENCE [MRNA]</scope>
    <scope>FUNCTION</scope>
    <scope>CATALYTIC ACTIVITY</scope>
    <scope>BIOPHYSICOCHEMICAL PROPERTIES</scope>
</reference>
<dbReference type="EC" id="1.1.1.198" evidence="5"/>
<dbReference type="EMBL" id="MT525099">
    <property type="protein sequence ID" value="QXO33291.1"/>
    <property type="molecule type" value="mRNA"/>
</dbReference>
<dbReference type="PDB" id="7O6P">
    <property type="method" value="EM"/>
    <property type="resolution" value="2.04 A"/>
    <property type="chains" value="A/B/C/D=1-283"/>
</dbReference>
<dbReference type="PDBsum" id="7O6P"/>
<dbReference type="EMDB" id="EMD-12739"/>
<dbReference type="SMR" id="A0A8F5XX49"/>
<dbReference type="GO" id="GO:0005829">
    <property type="term" value="C:cytosol"/>
    <property type="evidence" value="ECO:0007669"/>
    <property type="project" value="TreeGrafter"/>
</dbReference>
<dbReference type="GO" id="GO:0047500">
    <property type="term" value="F:(+)-borneol dehydrogenase activity"/>
    <property type="evidence" value="ECO:0000314"/>
    <property type="project" value="UniProtKB"/>
</dbReference>
<dbReference type="GO" id="GO:0010301">
    <property type="term" value="F:xanthoxin dehydrogenase (NAD+) activity"/>
    <property type="evidence" value="ECO:0007669"/>
    <property type="project" value="TreeGrafter"/>
</dbReference>
<dbReference type="GO" id="GO:0046211">
    <property type="term" value="P:(+)-camphor biosynthetic process"/>
    <property type="evidence" value="ECO:0000314"/>
    <property type="project" value="UniProtKB"/>
</dbReference>
<dbReference type="GO" id="GO:0009688">
    <property type="term" value="P:abscisic acid biosynthetic process"/>
    <property type="evidence" value="ECO:0007669"/>
    <property type="project" value="TreeGrafter"/>
</dbReference>
<dbReference type="CDD" id="cd05326">
    <property type="entry name" value="secoisolariciresinol-DH_like_SDR_c"/>
    <property type="match status" value="1"/>
</dbReference>
<dbReference type="FunFam" id="3.40.50.720:FF:000084">
    <property type="entry name" value="Short-chain dehydrogenase reductase"/>
    <property type="match status" value="1"/>
</dbReference>
<dbReference type="Gene3D" id="3.40.50.720">
    <property type="entry name" value="NAD(P)-binding Rossmann-like Domain"/>
    <property type="match status" value="1"/>
</dbReference>
<dbReference type="InterPro" id="IPR045309">
    <property type="entry name" value="ABA2-like"/>
</dbReference>
<dbReference type="InterPro" id="IPR036291">
    <property type="entry name" value="NAD(P)-bd_dom_sf"/>
</dbReference>
<dbReference type="InterPro" id="IPR002347">
    <property type="entry name" value="SDR_fam"/>
</dbReference>
<dbReference type="NCBIfam" id="NF005559">
    <property type="entry name" value="PRK07231.1"/>
    <property type="match status" value="1"/>
</dbReference>
<dbReference type="PANTHER" id="PTHR42820">
    <property type="entry name" value="SHORT-CHAIN DEHYDROGENASE REDUCTASE"/>
    <property type="match status" value="1"/>
</dbReference>
<dbReference type="PANTHER" id="PTHR42820:SF1">
    <property type="entry name" value="SHORT-CHAIN DEHYDROGENASE_REDUCTASE FAMILY PROTEIN"/>
    <property type="match status" value="1"/>
</dbReference>
<dbReference type="Pfam" id="PF13561">
    <property type="entry name" value="adh_short_C2"/>
    <property type="match status" value="1"/>
</dbReference>
<dbReference type="PRINTS" id="PR00081">
    <property type="entry name" value="GDHRDH"/>
</dbReference>
<dbReference type="PRINTS" id="PR00080">
    <property type="entry name" value="SDRFAMILY"/>
</dbReference>
<dbReference type="SUPFAM" id="SSF51735">
    <property type="entry name" value="NAD(P)-binding Rossmann-fold domains"/>
    <property type="match status" value="1"/>
</dbReference>
<accession>A0A8F5XX49</accession>
<keyword id="KW-0002">3D-structure</keyword>
<keyword id="KW-0520">NAD</keyword>
<keyword id="KW-0560">Oxidoreductase</keyword>
<protein>
    <recommendedName>
        <fullName evidence="6">(+)-borneol dehydrogenase 2</fullName>
        <shortName evidence="6">SoBDH2</shortName>
        <ecNumber evidence="5">1.1.1.198</ecNumber>
    </recommendedName>
</protein>
<feature type="chain" id="PRO_0000456337" description="(+)-borneol dehydrogenase 2">
    <location>
        <begin position="1"/>
        <end position="283"/>
    </location>
</feature>
<feature type="active site" description="Proton donor" evidence="2">
    <location>
        <position position="157"/>
    </location>
</feature>
<feature type="active site" description="Proton acceptor" evidence="4">
    <location>
        <position position="170"/>
    </location>
</feature>
<feature type="active site" description="Proton donor/acceptor" evidence="3">
    <location>
        <position position="174"/>
    </location>
</feature>
<feature type="binding site" evidence="8">
    <location>
        <begin position="27"/>
        <end position="33"/>
    </location>
    <ligand>
        <name>NAD(+)</name>
        <dbReference type="ChEBI" id="CHEBI:57540"/>
    </ligand>
</feature>
<feature type="binding site" evidence="1">
    <location>
        <position position="51"/>
    </location>
    <ligand>
        <name>NAD(+)</name>
        <dbReference type="ChEBI" id="CHEBI:57540"/>
    </ligand>
</feature>
<feature type="binding site" evidence="1">
    <location>
        <begin position="76"/>
        <end position="77"/>
    </location>
    <ligand>
        <name>NAD(+)</name>
        <dbReference type="ChEBI" id="CHEBI:57540"/>
    </ligand>
</feature>
<feature type="binding site" evidence="1">
    <location>
        <begin position="103"/>
        <end position="105"/>
    </location>
    <ligand>
        <name>NAD(+)</name>
        <dbReference type="ChEBI" id="CHEBI:57540"/>
    </ligand>
</feature>
<feature type="binding site" evidence="1">
    <location>
        <position position="170"/>
    </location>
    <ligand>
        <name>NAD(+)</name>
        <dbReference type="ChEBI" id="CHEBI:57540"/>
    </ligand>
</feature>
<feature type="binding site" evidence="1">
    <location>
        <position position="174"/>
    </location>
    <ligand>
        <name>NAD(+)</name>
        <dbReference type="ChEBI" id="CHEBI:57540"/>
    </ligand>
</feature>
<feature type="binding site" evidence="1">
    <location>
        <position position="205"/>
    </location>
    <ligand>
        <name>NAD(+)</name>
        <dbReference type="ChEBI" id="CHEBI:57540"/>
    </ligand>
</feature>
<feature type="turn" evidence="9">
    <location>
        <begin position="17"/>
        <end position="20"/>
    </location>
</feature>
<feature type="strand" evidence="9">
    <location>
        <begin position="22"/>
        <end position="26"/>
    </location>
</feature>
<feature type="turn" evidence="9">
    <location>
        <begin position="27"/>
        <end position="29"/>
    </location>
</feature>
<feature type="helix" evidence="9">
    <location>
        <begin position="32"/>
        <end position="42"/>
    </location>
</feature>
<feature type="strand" evidence="9">
    <location>
        <begin position="46"/>
        <end position="52"/>
    </location>
</feature>
<feature type="helix" evidence="9">
    <location>
        <begin position="54"/>
        <end position="64"/>
    </location>
</feature>
<feature type="strand" evidence="9">
    <location>
        <begin position="70"/>
        <end position="74"/>
    </location>
</feature>
<feature type="helix" evidence="9">
    <location>
        <begin position="80"/>
        <end position="94"/>
    </location>
</feature>
<feature type="strand" evidence="9">
    <location>
        <begin position="99"/>
        <end position="102"/>
    </location>
</feature>
<feature type="helix" evidence="9">
    <location>
        <begin position="114"/>
        <end position="116"/>
    </location>
</feature>
<feature type="helix" evidence="9">
    <location>
        <begin position="119"/>
        <end position="129"/>
    </location>
</feature>
<feature type="helix" evidence="9">
    <location>
        <begin position="131"/>
        <end position="147"/>
    </location>
</feature>
<feature type="strand" evidence="9">
    <location>
        <begin position="150"/>
        <end position="155"/>
    </location>
</feature>
<feature type="helix" evidence="9">
    <location>
        <begin position="158"/>
        <end position="160"/>
    </location>
</feature>
<feature type="helix" evidence="9">
    <location>
        <begin position="168"/>
        <end position="188"/>
    </location>
</feature>
<feature type="helix" evidence="9">
    <location>
        <begin position="189"/>
        <end position="191"/>
    </location>
</feature>
<feature type="strand" evidence="9">
    <location>
        <begin position="193"/>
        <end position="200"/>
    </location>
</feature>
<feature type="helix" evidence="9">
    <location>
        <begin position="222"/>
        <end position="231"/>
    </location>
</feature>
<feature type="helix" evidence="9">
    <location>
        <begin position="242"/>
        <end position="253"/>
    </location>
</feature>
<feature type="helix" evidence="9">
    <location>
        <begin position="255"/>
        <end position="257"/>
    </location>
</feature>
<feature type="strand" evidence="9">
    <location>
        <begin position="262"/>
        <end position="268"/>
    </location>
</feature>
<feature type="turn" evidence="9">
    <location>
        <begin position="269"/>
        <end position="273"/>
    </location>
</feature>